<protein>
    <recommendedName>
        <fullName evidence="1">Methionine--tRNA ligase</fullName>
        <ecNumber evidence="1">6.1.1.10</ecNumber>
    </recommendedName>
    <alternativeName>
        <fullName evidence="1">Methionyl-tRNA synthetase</fullName>
        <shortName evidence="1">MetRS</shortName>
    </alternativeName>
</protein>
<proteinExistence type="inferred from homology"/>
<comment type="function">
    <text evidence="1">Is required not only for elongation of protein synthesis but also for the initiation of all mRNA translation through initiator tRNA(fMet) aminoacylation.</text>
</comment>
<comment type="catalytic activity">
    <reaction evidence="1">
        <text>tRNA(Met) + L-methionine + ATP = L-methionyl-tRNA(Met) + AMP + diphosphate</text>
        <dbReference type="Rhea" id="RHEA:13481"/>
        <dbReference type="Rhea" id="RHEA-COMP:9667"/>
        <dbReference type="Rhea" id="RHEA-COMP:9698"/>
        <dbReference type="ChEBI" id="CHEBI:30616"/>
        <dbReference type="ChEBI" id="CHEBI:33019"/>
        <dbReference type="ChEBI" id="CHEBI:57844"/>
        <dbReference type="ChEBI" id="CHEBI:78442"/>
        <dbReference type="ChEBI" id="CHEBI:78530"/>
        <dbReference type="ChEBI" id="CHEBI:456215"/>
        <dbReference type="EC" id="6.1.1.10"/>
    </reaction>
</comment>
<comment type="cofactor">
    <cofactor evidence="1">
        <name>Zn(2+)</name>
        <dbReference type="ChEBI" id="CHEBI:29105"/>
    </cofactor>
    <text evidence="1">Binds 1 zinc ion per subunit.</text>
</comment>
<comment type="subunit">
    <text evidence="1">Homodimer.</text>
</comment>
<comment type="subcellular location">
    <subcellularLocation>
        <location evidence="1">Cytoplasm</location>
    </subcellularLocation>
</comment>
<comment type="similarity">
    <text evidence="1">Belongs to the class-I aminoacyl-tRNA synthetase family. MetG type 1 subfamily.</text>
</comment>
<sequence length="698" mass="77762">MHEEFPTETPAVVTCGLPYANGDLHVGHLRTYVSGDAYARALESLGQSVAFVSGSDMHGTPIAVNAAEEGVDPESFAVEYHEQYEETFPQFNIEFDNYGHTHDETNTEMTRSFVRSWIDDDHVVEKEIEVAWDAEADQPLPDRFVEGTCPYCGEKARGDECDEGCQRHLEPGEIEAPVSTITGNPAEYRTRPHKFLRLSDFQEYLRGFIDRLEGTENAQNQPREWIEGELQDLCITRDMDWGIDYPADGDESGEDLVLYVWVDAPIEYVSSTKQYSEQVGRDEYDWEAVWKNQVDGVPPEGGEIVHIIGHDIIQHHTVFWPAMLRGAGFNEPRAVMACGFVNLDGDAFSTSRNRAVWADDYIESGLHPDLYRYHIITGSEFTADVDFSWDGLQERTNSELVGTLGNFLYRSLLFAERNYGGTPDAAVSDEVRNEIEAAMADFRTAVNDYRVRGLGRAPVELATFGNEYIQRHEPWKLTDDDPEKARQVIRDCVQIAKAIAVLAEPVLPGKAAALWDQLGEDGSVHDAELGAALESPPEAFDEPDELFEKLEDDRIEELNRQLEERIEAADAGDEEGEDEDEEPPAADLEPVADERISFGDFQDLDIRVAEVLEAEPIEGADDLAKLAVDIGVETRQIVAGIKQLHDLDSLSGTRIVVVANLEKAELFGVESNGMLLAAGEQADLLTTLEDAEPGTKVQ</sequence>
<organism>
    <name type="scientific">Natronomonas pharaonis (strain ATCC 35678 / DSM 2160 / CIP 103997 / JCM 8858 / NBRC 14720 / NCIMB 2260 / Gabara)</name>
    <name type="common">Halobacterium pharaonis</name>
    <dbReference type="NCBI Taxonomy" id="348780"/>
    <lineage>
        <taxon>Archaea</taxon>
        <taxon>Methanobacteriati</taxon>
        <taxon>Methanobacteriota</taxon>
        <taxon>Stenosarchaea group</taxon>
        <taxon>Halobacteria</taxon>
        <taxon>Halobacteriales</taxon>
        <taxon>Haloarculaceae</taxon>
        <taxon>Natronomonas</taxon>
    </lineage>
</organism>
<gene>
    <name evidence="1" type="primary">metG</name>
    <name type="ordered locus">NP_1192A</name>
</gene>
<name>SYM_NATPD</name>
<reference key="1">
    <citation type="journal article" date="2005" name="Genome Res.">
        <title>Living with two extremes: conclusions from the genome sequence of Natronomonas pharaonis.</title>
        <authorList>
            <person name="Falb M."/>
            <person name="Pfeiffer F."/>
            <person name="Palm P."/>
            <person name="Rodewald K."/>
            <person name="Hickmann V."/>
            <person name="Tittor J."/>
            <person name="Oesterhelt D."/>
        </authorList>
    </citation>
    <scope>NUCLEOTIDE SEQUENCE [LARGE SCALE GENOMIC DNA]</scope>
    <source>
        <strain>ATCC 35678 / DSM 2160 / CIP 103997 / JCM 8858 / NBRC 14720 / NCIMB 2260 / Gabara</strain>
    </source>
</reference>
<evidence type="ECO:0000255" key="1">
    <source>
        <dbReference type="HAMAP-Rule" id="MF_00098"/>
    </source>
</evidence>
<evidence type="ECO:0000256" key="2">
    <source>
        <dbReference type="SAM" id="MobiDB-lite"/>
    </source>
</evidence>
<feature type="chain" id="PRO_0000331952" description="Methionine--tRNA ligase">
    <location>
        <begin position="1"/>
        <end position="698"/>
    </location>
</feature>
<feature type="domain" description="tRNA-binding" evidence="1">
    <location>
        <begin position="600"/>
        <end position="698"/>
    </location>
</feature>
<feature type="region of interest" description="Disordered" evidence="2">
    <location>
        <begin position="567"/>
        <end position="590"/>
    </location>
</feature>
<feature type="short sequence motif" description="'HIGH' region">
    <location>
        <begin position="18"/>
        <end position="28"/>
    </location>
</feature>
<feature type="compositionally biased region" description="Acidic residues" evidence="2">
    <location>
        <begin position="570"/>
        <end position="584"/>
    </location>
</feature>
<feature type="binding site" evidence="1">
    <location>
        <position position="149"/>
    </location>
    <ligand>
        <name>Zn(2+)</name>
        <dbReference type="ChEBI" id="CHEBI:29105"/>
    </ligand>
</feature>
<feature type="binding site" evidence="1">
    <location>
        <position position="152"/>
    </location>
    <ligand>
        <name>Zn(2+)</name>
        <dbReference type="ChEBI" id="CHEBI:29105"/>
    </ligand>
</feature>
<feature type="binding site" evidence="1">
    <location>
        <position position="161"/>
    </location>
    <ligand>
        <name>Zn(2+)</name>
        <dbReference type="ChEBI" id="CHEBI:29105"/>
    </ligand>
</feature>
<feature type="binding site" evidence="1">
    <location>
        <position position="165"/>
    </location>
    <ligand>
        <name>Zn(2+)</name>
        <dbReference type="ChEBI" id="CHEBI:29105"/>
    </ligand>
</feature>
<feature type="binding site" evidence="1">
    <location>
        <position position="350"/>
    </location>
    <ligand>
        <name>ATP</name>
        <dbReference type="ChEBI" id="CHEBI:30616"/>
    </ligand>
</feature>
<keyword id="KW-0030">Aminoacyl-tRNA synthetase</keyword>
<keyword id="KW-0067">ATP-binding</keyword>
<keyword id="KW-0963">Cytoplasm</keyword>
<keyword id="KW-0436">Ligase</keyword>
<keyword id="KW-0479">Metal-binding</keyword>
<keyword id="KW-0547">Nucleotide-binding</keyword>
<keyword id="KW-0648">Protein biosynthesis</keyword>
<keyword id="KW-1185">Reference proteome</keyword>
<keyword id="KW-0694">RNA-binding</keyword>
<keyword id="KW-0820">tRNA-binding</keyword>
<keyword id="KW-0862">Zinc</keyword>
<accession>Q3IT47</accession>
<dbReference type="EC" id="6.1.1.10" evidence="1"/>
<dbReference type="EMBL" id="CR936257">
    <property type="protein sequence ID" value="CAI48687.1"/>
    <property type="molecule type" value="Genomic_DNA"/>
</dbReference>
<dbReference type="RefSeq" id="WP_011322323.1">
    <property type="nucleotide sequence ID" value="NC_007426.1"/>
</dbReference>
<dbReference type="SMR" id="Q3IT47"/>
<dbReference type="STRING" id="348780.NP_1192A"/>
<dbReference type="EnsemblBacteria" id="CAI48687">
    <property type="protein sequence ID" value="CAI48687"/>
    <property type="gene ID" value="NP_1192A"/>
</dbReference>
<dbReference type="GeneID" id="3702919"/>
<dbReference type="KEGG" id="nph:NP_1192A"/>
<dbReference type="eggNOG" id="arCOG00810">
    <property type="taxonomic scope" value="Archaea"/>
</dbReference>
<dbReference type="HOGENOM" id="CLU_009710_7_0_2"/>
<dbReference type="OrthoDB" id="371856at2157"/>
<dbReference type="Proteomes" id="UP000002698">
    <property type="component" value="Chromosome"/>
</dbReference>
<dbReference type="GO" id="GO:0017101">
    <property type="term" value="C:aminoacyl-tRNA synthetase multienzyme complex"/>
    <property type="evidence" value="ECO:0007669"/>
    <property type="project" value="TreeGrafter"/>
</dbReference>
<dbReference type="GO" id="GO:0005829">
    <property type="term" value="C:cytosol"/>
    <property type="evidence" value="ECO:0007669"/>
    <property type="project" value="TreeGrafter"/>
</dbReference>
<dbReference type="GO" id="GO:0005524">
    <property type="term" value="F:ATP binding"/>
    <property type="evidence" value="ECO:0007669"/>
    <property type="project" value="UniProtKB-UniRule"/>
</dbReference>
<dbReference type="GO" id="GO:0046872">
    <property type="term" value="F:metal ion binding"/>
    <property type="evidence" value="ECO:0007669"/>
    <property type="project" value="UniProtKB-KW"/>
</dbReference>
<dbReference type="GO" id="GO:0004825">
    <property type="term" value="F:methionine-tRNA ligase activity"/>
    <property type="evidence" value="ECO:0007669"/>
    <property type="project" value="UniProtKB-UniRule"/>
</dbReference>
<dbReference type="GO" id="GO:0000049">
    <property type="term" value="F:tRNA binding"/>
    <property type="evidence" value="ECO:0007669"/>
    <property type="project" value="UniProtKB-KW"/>
</dbReference>
<dbReference type="GO" id="GO:0006431">
    <property type="term" value="P:methionyl-tRNA aminoacylation"/>
    <property type="evidence" value="ECO:0007669"/>
    <property type="project" value="UniProtKB-UniRule"/>
</dbReference>
<dbReference type="CDD" id="cd07957">
    <property type="entry name" value="Anticodon_Ia_Met"/>
    <property type="match status" value="1"/>
</dbReference>
<dbReference type="CDD" id="cd00814">
    <property type="entry name" value="MetRS_core"/>
    <property type="match status" value="1"/>
</dbReference>
<dbReference type="CDD" id="cd02800">
    <property type="entry name" value="tRNA_bind_EcMetRS_like"/>
    <property type="match status" value="1"/>
</dbReference>
<dbReference type="FunFam" id="2.20.28.20:FF:000001">
    <property type="entry name" value="Methionine--tRNA ligase"/>
    <property type="match status" value="1"/>
</dbReference>
<dbReference type="Gene3D" id="3.40.50.620">
    <property type="entry name" value="HUPs"/>
    <property type="match status" value="1"/>
</dbReference>
<dbReference type="Gene3D" id="1.10.730.10">
    <property type="entry name" value="Isoleucyl-tRNA Synthetase, Domain 1"/>
    <property type="match status" value="1"/>
</dbReference>
<dbReference type="Gene3D" id="2.20.28.20">
    <property type="entry name" value="Methionyl-tRNA synthetase, Zn-domain"/>
    <property type="match status" value="1"/>
</dbReference>
<dbReference type="Gene3D" id="2.40.50.140">
    <property type="entry name" value="Nucleic acid-binding proteins"/>
    <property type="match status" value="1"/>
</dbReference>
<dbReference type="HAMAP" id="MF_00098">
    <property type="entry name" value="Met_tRNA_synth_type1"/>
    <property type="match status" value="1"/>
</dbReference>
<dbReference type="InterPro" id="IPR001412">
    <property type="entry name" value="aa-tRNA-synth_I_CS"/>
</dbReference>
<dbReference type="InterPro" id="IPR041872">
    <property type="entry name" value="Anticodon_Met"/>
</dbReference>
<dbReference type="InterPro" id="IPR004495">
    <property type="entry name" value="Met-tRNA-synth_bsu_C"/>
</dbReference>
<dbReference type="InterPro" id="IPR023458">
    <property type="entry name" value="Met-tRNA_ligase_1"/>
</dbReference>
<dbReference type="InterPro" id="IPR014758">
    <property type="entry name" value="Met-tRNA_synth"/>
</dbReference>
<dbReference type="InterPro" id="IPR015413">
    <property type="entry name" value="Methionyl/Leucyl_tRNA_Synth"/>
</dbReference>
<dbReference type="InterPro" id="IPR033911">
    <property type="entry name" value="MetRS_core"/>
</dbReference>
<dbReference type="InterPro" id="IPR029038">
    <property type="entry name" value="MetRS_Zn"/>
</dbReference>
<dbReference type="InterPro" id="IPR012340">
    <property type="entry name" value="NA-bd_OB-fold"/>
</dbReference>
<dbReference type="InterPro" id="IPR014729">
    <property type="entry name" value="Rossmann-like_a/b/a_fold"/>
</dbReference>
<dbReference type="InterPro" id="IPR002547">
    <property type="entry name" value="tRNA-bd_dom"/>
</dbReference>
<dbReference type="InterPro" id="IPR009080">
    <property type="entry name" value="tRNAsynth_Ia_anticodon-bd"/>
</dbReference>
<dbReference type="NCBIfam" id="TIGR00398">
    <property type="entry name" value="metG"/>
    <property type="match status" value="1"/>
</dbReference>
<dbReference type="NCBIfam" id="NF001100">
    <property type="entry name" value="PRK00133.1"/>
    <property type="match status" value="1"/>
</dbReference>
<dbReference type="PANTHER" id="PTHR45765">
    <property type="entry name" value="METHIONINE--TRNA LIGASE"/>
    <property type="match status" value="1"/>
</dbReference>
<dbReference type="PANTHER" id="PTHR45765:SF1">
    <property type="entry name" value="METHIONINE--TRNA LIGASE, CYTOPLASMIC"/>
    <property type="match status" value="1"/>
</dbReference>
<dbReference type="Pfam" id="PF19303">
    <property type="entry name" value="Anticodon_3"/>
    <property type="match status" value="1"/>
</dbReference>
<dbReference type="Pfam" id="PF09334">
    <property type="entry name" value="tRNA-synt_1g"/>
    <property type="match status" value="1"/>
</dbReference>
<dbReference type="Pfam" id="PF01588">
    <property type="entry name" value="tRNA_bind"/>
    <property type="match status" value="1"/>
</dbReference>
<dbReference type="PRINTS" id="PR01041">
    <property type="entry name" value="TRNASYNTHMET"/>
</dbReference>
<dbReference type="SUPFAM" id="SSF47323">
    <property type="entry name" value="Anticodon-binding domain of a subclass of class I aminoacyl-tRNA synthetases"/>
    <property type="match status" value="1"/>
</dbReference>
<dbReference type="SUPFAM" id="SSF57770">
    <property type="entry name" value="Methionyl-tRNA synthetase (MetRS), Zn-domain"/>
    <property type="match status" value="1"/>
</dbReference>
<dbReference type="SUPFAM" id="SSF50249">
    <property type="entry name" value="Nucleic acid-binding proteins"/>
    <property type="match status" value="1"/>
</dbReference>
<dbReference type="SUPFAM" id="SSF52374">
    <property type="entry name" value="Nucleotidylyl transferase"/>
    <property type="match status" value="1"/>
</dbReference>
<dbReference type="PROSITE" id="PS00178">
    <property type="entry name" value="AA_TRNA_LIGASE_I"/>
    <property type="match status" value="1"/>
</dbReference>
<dbReference type="PROSITE" id="PS50886">
    <property type="entry name" value="TRBD"/>
    <property type="match status" value="1"/>
</dbReference>